<comment type="catalytic activity">
    <reaction evidence="1">
        <text>beta-D-fructose 1,6-bisphosphate + H2O = beta-D-fructose 6-phosphate + phosphate</text>
        <dbReference type="Rhea" id="RHEA:11064"/>
        <dbReference type="ChEBI" id="CHEBI:15377"/>
        <dbReference type="ChEBI" id="CHEBI:32966"/>
        <dbReference type="ChEBI" id="CHEBI:43474"/>
        <dbReference type="ChEBI" id="CHEBI:57634"/>
        <dbReference type="EC" id="3.1.3.11"/>
    </reaction>
</comment>
<comment type="cofactor">
    <cofactor evidence="1">
        <name>Mg(2+)</name>
        <dbReference type="ChEBI" id="CHEBI:18420"/>
    </cofactor>
    <text evidence="1">Binds 2 magnesium ions per subunit.</text>
</comment>
<comment type="pathway">
    <text evidence="1">Carbohydrate biosynthesis; gluconeogenesis.</text>
</comment>
<comment type="subunit">
    <text evidence="1">Homotetramer.</text>
</comment>
<comment type="subcellular location">
    <subcellularLocation>
        <location evidence="1">Cytoplasm</location>
    </subcellularLocation>
</comment>
<comment type="similarity">
    <text evidence="1">Belongs to the FBPase class 1 family.</text>
</comment>
<accession>A1VL56</accession>
<protein>
    <recommendedName>
        <fullName evidence="1">Fructose-1,6-bisphosphatase class 1 1</fullName>
        <shortName evidence="1">FBPase class 1 1</shortName>
        <ecNumber evidence="1">3.1.3.11</ecNumber>
    </recommendedName>
    <alternativeName>
        <fullName evidence="1">D-fructose-1,6-bisphosphate 1-phosphohydrolase class 1 1</fullName>
    </alternativeName>
</protein>
<name>F16A1_POLNA</name>
<evidence type="ECO:0000255" key="1">
    <source>
        <dbReference type="HAMAP-Rule" id="MF_01855"/>
    </source>
</evidence>
<reference key="1">
    <citation type="journal article" date="2009" name="Environ. Microbiol.">
        <title>The genome of Polaromonas naphthalenivorans strain CJ2, isolated from coal tar-contaminated sediment, reveals physiological and metabolic versatility and evolution through extensive horizontal gene transfer.</title>
        <authorList>
            <person name="Yagi J.M."/>
            <person name="Sims D."/>
            <person name="Brettin T."/>
            <person name="Bruce D."/>
            <person name="Madsen E.L."/>
        </authorList>
    </citation>
    <scope>NUCLEOTIDE SEQUENCE [LARGE SCALE GENOMIC DNA]</scope>
    <source>
        <strain>CJ2</strain>
    </source>
</reference>
<feature type="chain" id="PRO_0000364628" description="Fructose-1,6-bisphosphatase class 1 1">
    <location>
        <begin position="1"/>
        <end position="335"/>
    </location>
</feature>
<feature type="binding site" evidence="1">
    <location>
        <position position="92"/>
    </location>
    <ligand>
        <name>Mg(2+)</name>
        <dbReference type="ChEBI" id="CHEBI:18420"/>
        <label>1</label>
    </ligand>
</feature>
<feature type="binding site" evidence="1">
    <location>
        <position position="114"/>
    </location>
    <ligand>
        <name>Mg(2+)</name>
        <dbReference type="ChEBI" id="CHEBI:18420"/>
        <label>1</label>
    </ligand>
</feature>
<feature type="binding site" evidence="1">
    <location>
        <position position="114"/>
    </location>
    <ligand>
        <name>Mg(2+)</name>
        <dbReference type="ChEBI" id="CHEBI:18420"/>
        <label>2</label>
    </ligand>
</feature>
<feature type="binding site" evidence="1">
    <location>
        <position position="116"/>
    </location>
    <ligand>
        <name>Mg(2+)</name>
        <dbReference type="ChEBI" id="CHEBI:18420"/>
        <label>1</label>
    </ligand>
</feature>
<feature type="binding site" evidence="1">
    <location>
        <begin position="117"/>
        <end position="120"/>
    </location>
    <ligand>
        <name>substrate</name>
    </ligand>
</feature>
<feature type="binding site" evidence="1">
    <location>
        <position position="117"/>
    </location>
    <ligand>
        <name>Mg(2+)</name>
        <dbReference type="ChEBI" id="CHEBI:18420"/>
        <label>2</label>
    </ligand>
</feature>
<feature type="binding site" evidence="1">
    <location>
        <position position="209"/>
    </location>
    <ligand>
        <name>substrate</name>
    </ligand>
</feature>
<feature type="binding site" evidence="1">
    <location>
        <position position="275"/>
    </location>
    <ligand>
        <name>substrate</name>
    </ligand>
</feature>
<feature type="binding site" evidence="1">
    <location>
        <position position="281"/>
    </location>
    <ligand>
        <name>Mg(2+)</name>
        <dbReference type="ChEBI" id="CHEBI:18420"/>
        <label>2</label>
    </ligand>
</feature>
<proteinExistence type="inferred from homology"/>
<keyword id="KW-0119">Carbohydrate metabolism</keyword>
<keyword id="KW-0963">Cytoplasm</keyword>
<keyword id="KW-0378">Hydrolase</keyword>
<keyword id="KW-0460">Magnesium</keyword>
<keyword id="KW-0479">Metal-binding</keyword>
<keyword id="KW-1185">Reference proteome</keyword>
<organism>
    <name type="scientific">Polaromonas naphthalenivorans (strain CJ2)</name>
    <dbReference type="NCBI Taxonomy" id="365044"/>
    <lineage>
        <taxon>Bacteria</taxon>
        <taxon>Pseudomonadati</taxon>
        <taxon>Pseudomonadota</taxon>
        <taxon>Betaproteobacteria</taxon>
        <taxon>Burkholderiales</taxon>
        <taxon>Comamonadaceae</taxon>
        <taxon>Polaromonas</taxon>
    </lineage>
</organism>
<dbReference type="EC" id="3.1.3.11" evidence="1"/>
<dbReference type="EMBL" id="CP000529">
    <property type="protein sequence ID" value="ABM36384.1"/>
    <property type="molecule type" value="Genomic_DNA"/>
</dbReference>
<dbReference type="RefSeq" id="WP_011800478.1">
    <property type="nucleotide sequence ID" value="NC_008781.1"/>
</dbReference>
<dbReference type="SMR" id="A1VL56"/>
<dbReference type="STRING" id="365044.Pnap_1067"/>
<dbReference type="KEGG" id="pna:Pnap_1067"/>
<dbReference type="eggNOG" id="COG0158">
    <property type="taxonomic scope" value="Bacteria"/>
</dbReference>
<dbReference type="HOGENOM" id="CLU_039977_0_0_4"/>
<dbReference type="OrthoDB" id="9806756at2"/>
<dbReference type="UniPathway" id="UPA00138"/>
<dbReference type="Proteomes" id="UP000000644">
    <property type="component" value="Chromosome"/>
</dbReference>
<dbReference type="GO" id="GO:0005829">
    <property type="term" value="C:cytosol"/>
    <property type="evidence" value="ECO:0007669"/>
    <property type="project" value="TreeGrafter"/>
</dbReference>
<dbReference type="GO" id="GO:0042132">
    <property type="term" value="F:fructose 1,6-bisphosphate 1-phosphatase activity"/>
    <property type="evidence" value="ECO:0007669"/>
    <property type="project" value="UniProtKB-UniRule"/>
</dbReference>
<dbReference type="GO" id="GO:0000287">
    <property type="term" value="F:magnesium ion binding"/>
    <property type="evidence" value="ECO:0007669"/>
    <property type="project" value="UniProtKB-UniRule"/>
</dbReference>
<dbReference type="GO" id="GO:0030388">
    <property type="term" value="P:fructose 1,6-bisphosphate metabolic process"/>
    <property type="evidence" value="ECO:0007669"/>
    <property type="project" value="TreeGrafter"/>
</dbReference>
<dbReference type="GO" id="GO:0006002">
    <property type="term" value="P:fructose 6-phosphate metabolic process"/>
    <property type="evidence" value="ECO:0007669"/>
    <property type="project" value="TreeGrafter"/>
</dbReference>
<dbReference type="GO" id="GO:0006000">
    <property type="term" value="P:fructose metabolic process"/>
    <property type="evidence" value="ECO:0007669"/>
    <property type="project" value="TreeGrafter"/>
</dbReference>
<dbReference type="GO" id="GO:0006094">
    <property type="term" value="P:gluconeogenesis"/>
    <property type="evidence" value="ECO:0007669"/>
    <property type="project" value="UniProtKB-UniRule"/>
</dbReference>
<dbReference type="GO" id="GO:0005986">
    <property type="term" value="P:sucrose biosynthetic process"/>
    <property type="evidence" value="ECO:0007669"/>
    <property type="project" value="TreeGrafter"/>
</dbReference>
<dbReference type="CDD" id="cd00354">
    <property type="entry name" value="FBPase"/>
    <property type="match status" value="1"/>
</dbReference>
<dbReference type="FunFam" id="3.30.540.10:FF:000006">
    <property type="entry name" value="Fructose-1,6-bisphosphatase class 1"/>
    <property type="match status" value="1"/>
</dbReference>
<dbReference type="FunFam" id="3.40.190.80:FF:000011">
    <property type="entry name" value="Fructose-1,6-bisphosphatase class 1"/>
    <property type="match status" value="1"/>
</dbReference>
<dbReference type="Gene3D" id="3.40.190.80">
    <property type="match status" value="1"/>
</dbReference>
<dbReference type="Gene3D" id="3.30.540.10">
    <property type="entry name" value="Fructose-1,6-Bisphosphatase, subunit A, domain 1"/>
    <property type="match status" value="1"/>
</dbReference>
<dbReference type="HAMAP" id="MF_01855">
    <property type="entry name" value="FBPase_class1"/>
    <property type="match status" value="1"/>
</dbReference>
<dbReference type="InterPro" id="IPR044015">
    <property type="entry name" value="FBPase_C_dom"/>
</dbReference>
<dbReference type="InterPro" id="IPR000146">
    <property type="entry name" value="FBPase_class-1"/>
</dbReference>
<dbReference type="InterPro" id="IPR033391">
    <property type="entry name" value="FBPase_N"/>
</dbReference>
<dbReference type="InterPro" id="IPR028343">
    <property type="entry name" value="FBPtase"/>
</dbReference>
<dbReference type="NCBIfam" id="NF006778">
    <property type="entry name" value="PRK09293.1-1"/>
    <property type="match status" value="1"/>
</dbReference>
<dbReference type="NCBIfam" id="NF006779">
    <property type="entry name" value="PRK09293.1-3"/>
    <property type="match status" value="1"/>
</dbReference>
<dbReference type="NCBIfam" id="NF006780">
    <property type="entry name" value="PRK09293.1-4"/>
    <property type="match status" value="1"/>
</dbReference>
<dbReference type="PANTHER" id="PTHR11556">
    <property type="entry name" value="FRUCTOSE-1,6-BISPHOSPHATASE-RELATED"/>
    <property type="match status" value="1"/>
</dbReference>
<dbReference type="PANTHER" id="PTHR11556:SF35">
    <property type="entry name" value="SEDOHEPTULOSE-1,7-BISPHOSPHATASE, CHLOROPLASTIC"/>
    <property type="match status" value="1"/>
</dbReference>
<dbReference type="Pfam" id="PF00316">
    <property type="entry name" value="FBPase"/>
    <property type="match status" value="1"/>
</dbReference>
<dbReference type="Pfam" id="PF18913">
    <property type="entry name" value="FBPase_C"/>
    <property type="match status" value="1"/>
</dbReference>
<dbReference type="PIRSF" id="PIRSF500210">
    <property type="entry name" value="FBPtase"/>
    <property type="match status" value="1"/>
</dbReference>
<dbReference type="PIRSF" id="PIRSF000904">
    <property type="entry name" value="FBPtase_SBPase"/>
    <property type="match status" value="1"/>
</dbReference>
<dbReference type="PRINTS" id="PR00115">
    <property type="entry name" value="F16BPHPHTASE"/>
</dbReference>
<dbReference type="SUPFAM" id="SSF56655">
    <property type="entry name" value="Carbohydrate phosphatase"/>
    <property type="match status" value="1"/>
</dbReference>
<sequence length="335" mass="37261">MSPKISLTRYLVEQQRIDGHIPPELRLLIEVVARACKSISQAVNKGALGDVMGSAGSENVQGEIQKKLDIIANEVLIEANEWGGHLAAMASEEMDDIYVVPNRYPQGEYLLMFDPLDGSSNIDVNVSIGTIFSVLKKSEDDRGVEESDFLQAGNQQVAAGYCVYGPQTTLVLTVGDGVAMFTLDREQGSFVLTEENVTIPDDTQEFAINMSNMRHWDEPVKRYINECLEGKDGPRGKDFNMRWIASMVADVHRILCRGGVFLYPWDKREPEKAGKLRLMYEANPMSWLIEQAGGAATNGKQRILDIQPTKLHERVSVILGSKNEVERLTAYHSGL</sequence>
<gene>
    <name evidence="1" type="primary">fbp1</name>
    <name type="ordered locus">Pnap_1067</name>
</gene>